<organism>
    <name type="scientific">Acinetobacter baumannii (strain ACICU)</name>
    <dbReference type="NCBI Taxonomy" id="405416"/>
    <lineage>
        <taxon>Bacteria</taxon>
        <taxon>Pseudomonadati</taxon>
        <taxon>Pseudomonadota</taxon>
        <taxon>Gammaproteobacteria</taxon>
        <taxon>Moraxellales</taxon>
        <taxon>Moraxellaceae</taxon>
        <taxon>Acinetobacter</taxon>
        <taxon>Acinetobacter calcoaceticus/baumannii complex</taxon>
    </lineage>
</organism>
<protein>
    <recommendedName>
        <fullName evidence="1">Xanthine phosphoribosyltransferase</fullName>
        <shortName evidence="1">XPRTase</shortName>
        <ecNumber evidence="1">2.4.2.22</ecNumber>
    </recommendedName>
</protein>
<sequence>MHALEQKILTEGIVLSDQVLKVDAFLNHQIDPVLMQQIGKEFAARFKDAGITKIITIEASGIAPAIMAGLELGVPVIFARKYQSLTLKDDLYRAKVFSFTKQTESTIAISNKHINSSDKALVIDDFLANGQAALGLIDLIHQANAEVVGVGIVIEKSFQPGRDLLLEKGYRVESLARVQSLADGTVTFVKE</sequence>
<reference key="1">
    <citation type="journal article" date="2008" name="Antimicrob. Agents Chemother.">
        <title>Whole-genome pyrosequencing of an epidemic multidrug-resistant Acinetobacter baumannii strain belonging to the European clone II group.</title>
        <authorList>
            <person name="Iacono M."/>
            <person name="Villa L."/>
            <person name="Fortini D."/>
            <person name="Bordoni R."/>
            <person name="Imperi F."/>
            <person name="Bonnal R.J."/>
            <person name="Sicheritz-Ponten T."/>
            <person name="De Bellis G."/>
            <person name="Visca P."/>
            <person name="Cassone A."/>
            <person name="Carattoli A."/>
        </authorList>
    </citation>
    <scope>NUCLEOTIDE SEQUENCE [LARGE SCALE GENOMIC DNA]</scope>
    <source>
        <strain>ACICU</strain>
    </source>
</reference>
<dbReference type="EC" id="2.4.2.22" evidence="1"/>
<dbReference type="EMBL" id="CP000863">
    <property type="protein sequence ID" value="ACC58543.1"/>
    <property type="molecule type" value="Genomic_DNA"/>
</dbReference>
<dbReference type="RefSeq" id="WP_000543071.1">
    <property type="nucleotide sequence ID" value="NZ_CP031380.1"/>
</dbReference>
<dbReference type="SMR" id="B2HZ61"/>
<dbReference type="KEGG" id="abc:ACICU_03231"/>
<dbReference type="HOGENOM" id="CLU_099015_0_0_6"/>
<dbReference type="UniPathway" id="UPA00602">
    <property type="reaction ID" value="UER00658"/>
</dbReference>
<dbReference type="Proteomes" id="UP000008839">
    <property type="component" value="Chromosome"/>
</dbReference>
<dbReference type="GO" id="GO:0005737">
    <property type="term" value="C:cytoplasm"/>
    <property type="evidence" value="ECO:0007669"/>
    <property type="project" value="UniProtKB-SubCell"/>
</dbReference>
<dbReference type="GO" id="GO:0000310">
    <property type="term" value="F:xanthine phosphoribosyltransferase activity"/>
    <property type="evidence" value="ECO:0007669"/>
    <property type="project" value="UniProtKB-UniRule"/>
</dbReference>
<dbReference type="GO" id="GO:0006166">
    <property type="term" value="P:purine ribonucleoside salvage"/>
    <property type="evidence" value="ECO:0007669"/>
    <property type="project" value="UniProtKB-KW"/>
</dbReference>
<dbReference type="GO" id="GO:0046110">
    <property type="term" value="P:xanthine metabolic process"/>
    <property type="evidence" value="ECO:0007669"/>
    <property type="project" value="InterPro"/>
</dbReference>
<dbReference type="GO" id="GO:0032265">
    <property type="term" value="P:XMP salvage"/>
    <property type="evidence" value="ECO:0007669"/>
    <property type="project" value="UniProtKB-UniRule"/>
</dbReference>
<dbReference type="CDD" id="cd06223">
    <property type="entry name" value="PRTases_typeI"/>
    <property type="match status" value="1"/>
</dbReference>
<dbReference type="Gene3D" id="3.40.50.2020">
    <property type="match status" value="1"/>
</dbReference>
<dbReference type="HAMAP" id="MF_01184">
    <property type="entry name" value="XPRTase"/>
    <property type="match status" value="1"/>
</dbReference>
<dbReference type="InterPro" id="IPR000836">
    <property type="entry name" value="PRibTrfase_dom"/>
</dbReference>
<dbReference type="InterPro" id="IPR029057">
    <property type="entry name" value="PRTase-like"/>
</dbReference>
<dbReference type="InterPro" id="IPR050118">
    <property type="entry name" value="Pur/Pyrimidine_PRTase"/>
</dbReference>
<dbReference type="InterPro" id="IPR010079">
    <property type="entry name" value="Xanthine_PRibTrfase"/>
</dbReference>
<dbReference type="NCBIfam" id="NF006671">
    <property type="entry name" value="PRK09219.1"/>
    <property type="match status" value="1"/>
</dbReference>
<dbReference type="NCBIfam" id="TIGR01744">
    <property type="entry name" value="XPRTase"/>
    <property type="match status" value="1"/>
</dbReference>
<dbReference type="PANTHER" id="PTHR43864">
    <property type="entry name" value="HYPOXANTHINE/GUANINE PHOSPHORIBOSYLTRANSFERASE"/>
    <property type="match status" value="1"/>
</dbReference>
<dbReference type="PANTHER" id="PTHR43864:SF1">
    <property type="entry name" value="XANTHINE PHOSPHORIBOSYLTRANSFERASE"/>
    <property type="match status" value="1"/>
</dbReference>
<dbReference type="SUPFAM" id="SSF53271">
    <property type="entry name" value="PRTase-like"/>
    <property type="match status" value="1"/>
</dbReference>
<gene>
    <name evidence="1" type="primary">xpt</name>
    <name type="ordered locus">ACICU_03231</name>
</gene>
<evidence type="ECO:0000255" key="1">
    <source>
        <dbReference type="HAMAP-Rule" id="MF_01184"/>
    </source>
</evidence>
<accession>B2HZ61</accession>
<proteinExistence type="inferred from homology"/>
<keyword id="KW-0963">Cytoplasm</keyword>
<keyword id="KW-0328">Glycosyltransferase</keyword>
<keyword id="KW-0660">Purine salvage</keyword>
<keyword id="KW-0808">Transferase</keyword>
<feature type="chain" id="PRO_1000138228" description="Xanthine phosphoribosyltransferase">
    <location>
        <begin position="1"/>
        <end position="191"/>
    </location>
</feature>
<feature type="binding site" evidence="1">
    <location>
        <position position="20"/>
    </location>
    <ligand>
        <name>xanthine</name>
        <dbReference type="ChEBI" id="CHEBI:17712"/>
    </ligand>
</feature>
<feature type="binding site" evidence="1">
    <location>
        <position position="27"/>
    </location>
    <ligand>
        <name>xanthine</name>
        <dbReference type="ChEBI" id="CHEBI:17712"/>
    </ligand>
</feature>
<feature type="binding site" evidence="1">
    <location>
        <begin position="128"/>
        <end position="132"/>
    </location>
    <ligand>
        <name>5-phospho-alpha-D-ribose 1-diphosphate</name>
        <dbReference type="ChEBI" id="CHEBI:58017"/>
    </ligand>
</feature>
<feature type="binding site" evidence="1">
    <location>
        <position position="156"/>
    </location>
    <ligand>
        <name>xanthine</name>
        <dbReference type="ChEBI" id="CHEBI:17712"/>
    </ligand>
</feature>
<comment type="function">
    <text evidence="1">Converts the preformed base xanthine, a product of nucleic acid breakdown, to xanthosine 5'-monophosphate (XMP), so it can be reused for RNA or DNA synthesis.</text>
</comment>
<comment type="catalytic activity">
    <reaction evidence="1">
        <text>XMP + diphosphate = xanthine + 5-phospho-alpha-D-ribose 1-diphosphate</text>
        <dbReference type="Rhea" id="RHEA:10800"/>
        <dbReference type="ChEBI" id="CHEBI:17712"/>
        <dbReference type="ChEBI" id="CHEBI:33019"/>
        <dbReference type="ChEBI" id="CHEBI:57464"/>
        <dbReference type="ChEBI" id="CHEBI:58017"/>
        <dbReference type="EC" id="2.4.2.22"/>
    </reaction>
</comment>
<comment type="pathway">
    <text evidence="1">Purine metabolism; XMP biosynthesis via salvage pathway; XMP from xanthine: step 1/1.</text>
</comment>
<comment type="subunit">
    <text evidence="1">Homodimer.</text>
</comment>
<comment type="subcellular location">
    <subcellularLocation>
        <location evidence="1">Cytoplasm</location>
    </subcellularLocation>
</comment>
<comment type="similarity">
    <text evidence="1">Belongs to the purine/pyrimidine phosphoribosyltransferase family. Xpt subfamily.</text>
</comment>
<name>XPT_ACIBC</name>